<sequence>MKVRTSVKKICSSCKVIRRKGVIGVICTNPKHKQRQA</sequence>
<protein>
    <recommendedName>
        <fullName evidence="1">Large ribosomal subunit protein bL36</fullName>
    </recommendedName>
    <alternativeName>
        <fullName evidence="2">50S ribosomal protein L36</fullName>
    </alternativeName>
</protein>
<accession>Q9XD13</accession>
<organism>
    <name type="scientific">Leptospira interrogans serogroup Icterohaemorrhagiae serovar Lai (strain 56601)</name>
    <dbReference type="NCBI Taxonomy" id="189518"/>
    <lineage>
        <taxon>Bacteria</taxon>
        <taxon>Pseudomonadati</taxon>
        <taxon>Spirochaetota</taxon>
        <taxon>Spirochaetia</taxon>
        <taxon>Leptospirales</taxon>
        <taxon>Leptospiraceae</taxon>
        <taxon>Leptospira</taxon>
    </lineage>
</organism>
<keyword id="KW-1185">Reference proteome</keyword>
<keyword id="KW-0687">Ribonucleoprotein</keyword>
<keyword id="KW-0689">Ribosomal protein</keyword>
<gene>
    <name evidence="1" type="primary">rpmJ</name>
    <name type="ordered locus">LA_0761.1</name>
</gene>
<name>RL36_LEPIN</name>
<dbReference type="EMBL" id="AF115283">
    <property type="protein sequence ID" value="AAD40606.1"/>
    <property type="molecule type" value="Genomic_DNA"/>
</dbReference>
<dbReference type="EMBL" id="AE010300">
    <property type="status" value="NOT_ANNOTATED_CDS"/>
    <property type="molecule type" value="Genomic_DNA"/>
</dbReference>
<dbReference type="SMR" id="Q9XD13"/>
<dbReference type="FunCoup" id="Q9XD13">
    <property type="interactions" value="206"/>
</dbReference>
<dbReference type="STRING" id="189518.LA_0761a"/>
<dbReference type="PaxDb" id="189518-LA_0761a"/>
<dbReference type="InParanoid" id="Q9XD13"/>
<dbReference type="Proteomes" id="UP000001408">
    <property type="component" value="Chromosome I"/>
</dbReference>
<dbReference type="GO" id="GO:0005737">
    <property type="term" value="C:cytoplasm"/>
    <property type="evidence" value="ECO:0007669"/>
    <property type="project" value="UniProtKB-ARBA"/>
</dbReference>
<dbReference type="GO" id="GO:1990904">
    <property type="term" value="C:ribonucleoprotein complex"/>
    <property type="evidence" value="ECO:0007669"/>
    <property type="project" value="UniProtKB-KW"/>
</dbReference>
<dbReference type="GO" id="GO:0005840">
    <property type="term" value="C:ribosome"/>
    <property type="evidence" value="ECO:0007669"/>
    <property type="project" value="UniProtKB-KW"/>
</dbReference>
<dbReference type="GO" id="GO:0003735">
    <property type="term" value="F:structural constituent of ribosome"/>
    <property type="evidence" value="ECO:0007669"/>
    <property type="project" value="InterPro"/>
</dbReference>
<dbReference type="GO" id="GO:0006412">
    <property type="term" value="P:translation"/>
    <property type="evidence" value="ECO:0007669"/>
    <property type="project" value="UniProtKB-UniRule"/>
</dbReference>
<dbReference type="HAMAP" id="MF_00251">
    <property type="entry name" value="Ribosomal_bL36"/>
    <property type="match status" value="1"/>
</dbReference>
<dbReference type="InterPro" id="IPR000473">
    <property type="entry name" value="Ribosomal_bL36"/>
</dbReference>
<dbReference type="InterPro" id="IPR035977">
    <property type="entry name" value="Ribosomal_bL36_sp"/>
</dbReference>
<dbReference type="NCBIfam" id="TIGR01022">
    <property type="entry name" value="rpmJ_bact"/>
    <property type="match status" value="1"/>
</dbReference>
<dbReference type="PANTHER" id="PTHR42888">
    <property type="entry name" value="50S RIBOSOMAL PROTEIN L36, CHLOROPLASTIC"/>
    <property type="match status" value="1"/>
</dbReference>
<dbReference type="PANTHER" id="PTHR42888:SF1">
    <property type="entry name" value="LARGE RIBOSOMAL SUBUNIT PROTEIN BL36C"/>
    <property type="match status" value="1"/>
</dbReference>
<dbReference type="Pfam" id="PF00444">
    <property type="entry name" value="Ribosomal_L36"/>
    <property type="match status" value="1"/>
</dbReference>
<dbReference type="SUPFAM" id="SSF57840">
    <property type="entry name" value="Ribosomal protein L36"/>
    <property type="match status" value="1"/>
</dbReference>
<dbReference type="PROSITE" id="PS00828">
    <property type="entry name" value="RIBOSOMAL_L36"/>
    <property type="match status" value="1"/>
</dbReference>
<reference key="1">
    <citation type="journal article" date="2000" name="FEMS Microbiol. Lett.">
        <title>Characterization of the Leptospira interrogans S10-spc-alpha operon.</title>
        <authorList>
            <person name="Zuerner R.L."/>
            <person name="Hartskeerl R.A."/>
            <person name="van de Kemp H."/>
            <person name="Bal A.E."/>
        </authorList>
    </citation>
    <scope>NUCLEOTIDE SEQUENCE [GENOMIC DNA]</scope>
    <source>
        <strain>Lai / Serogroup Icterohaemorrhagiae / Serovar lai</strain>
    </source>
</reference>
<reference key="2">
    <citation type="journal article" date="2003" name="Nature">
        <title>Unique physiological and pathogenic features of Leptospira interrogans revealed by whole-genome sequencing.</title>
        <authorList>
            <person name="Ren S.-X."/>
            <person name="Fu G."/>
            <person name="Jiang X.-G."/>
            <person name="Zeng R."/>
            <person name="Miao Y.-G."/>
            <person name="Xu H."/>
            <person name="Zhang Y.-X."/>
            <person name="Xiong H."/>
            <person name="Lu G."/>
            <person name="Lu L.-F."/>
            <person name="Jiang H.-Q."/>
            <person name="Jia J."/>
            <person name="Tu Y.-F."/>
            <person name="Jiang J.-X."/>
            <person name="Gu W.-Y."/>
            <person name="Zhang Y.-Q."/>
            <person name="Cai Z."/>
            <person name="Sheng H.-H."/>
            <person name="Yin H.-F."/>
            <person name="Zhang Y."/>
            <person name="Zhu G.-F."/>
            <person name="Wan M."/>
            <person name="Huang H.-L."/>
            <person name="Qian Z."/>
            <person name="Wang S.-Y."/>
            <person name="Ma W."/>
            <person name="Yao Z.-J."/>
            <person name="Shen Y."/>
            <person name="Qiang B.-Q."/>
            <person name="Xia Q.-C."/>
            <person name="Guo X.-K."/>
            <person name="Danchin A."/>
            <person name="Saint Girons I."/>
            <person name="Somerville R.L."/>
            <person name="Wen Y.-M."/>
            <person name="Shi M.-H."/>
            <person name="Chen Z."/>
            <person name="Xu J.-G."/>
            <person name="Zhao G.-P."/>
        </authorList>
    </citation>
    <scope>NUCLEOTIDE SEQUENCE [LARGE SCALE GENOMIC DNA]</scope>
    <source>
        <strain>56601</strain>
    </source>
</reference>
<proteinExistence type="inferred from homology"/>
<feature type="chain" id="PRO_0000126205" description="Large ribosomal subunit protein bL36">
    <location>
        <begin position="1"/>
        <end position="37"/>
    </location>
</feature>
<feature type="sequence conflict" description="In Ref. 2." evidence="2" ref="2">
    <original>G</original>
    <variation>R</variation>
    <location>
        <position position="24"/>
    </location>
</feature>
<comment type="similarity">
    <text evidence="1">Belongs to the bacterial ribosomal protein bL36 family.</text>
</comment>
<evidence type="ECO:0000255" key="1">
    <source>
        <dbReference type="HAMAP-Rule" id="MF_00251"/>
    </source>
</evidence>
<evidence type="ECO:0000305" key="2"/>